<accession>A0L5X2</accession>
<proteinExistence type="inferred from homology"/>
<organism>
    <name type="scientific">Magnetococcus marinus (strain ATCC BAA-1437 / JCM 17883 / MC-1)</name>
    <dbReference type="NCBI Taxonomy" id="156889"/>
    <lineage>
        <taxon>Bacteria</taxon>
        <taxon>Pseudomonadati</taxon>
        <taxon>Pseudomonadota</taxon>
        <taxon>Alphaproteobacteria</taxon>
        <taxon>Magnetococcales</taxon>
        <taxon>Magnetococcaceae</taxon>
        <taxon>Magnetococcus</taxon>
    </lineage>
</organism>
<dbReference type="EMBL" id="CP000471">
    <property type="protein sequence ID" value="ABK43365.1"/>
    <property type="molecule type" value="Genomic_DNA"/>
</dbReference>
<dbReference type="SMR" id="A0L5X2"/>
<dbReference type="STRING" id="156889.Mmc1_0846"/>
<dbReference type="KEGG" id="mgm:Mmc1_0846"/>
<dbReference type="eggNOG" id="COG0051">
    <property type="taxonomic scope" value="Bacteria"/>
</dbReference>
<dbReference type="HOGENOM" id="CLU_122625_1_3_5"/>
<dbReference type="Proteomes" id="UP000002586">
    <property type="component" value="Chromosome"/>
</dbReference>
<dbReference type="GO" id="GO:1990904">
    <property type="term" value="C:ribonucleoprotein complex"/>
    <property type="evidence" value="ECO:0007669"/>
    <property type="project" value="UniProtKB-KW"/>
</dbReference>
<dbReference type="GO" id="GO:0005840">
    <property type="term" value="C:ribosome"/>
    <property type="evidence" value="ECO:0007669"/>
    <property type="project" value="UniProtKB-KW"/>
</dbReference>
<dbReference type="GO" id="GO:0003735">
    <property type="term" value="F:structural constituent of ribosome"/>
    <property type="evidence" value="ECO:0007669"/>
    <property type="project" value="InterPro"/>
</dbReference>
<dbReference type="GO" id="GO:0000049">
    <property type="term" value="F:tRNA binding"/>
    <property type="evidence" value="ECO:0007669"/>
    <property type="project" value="UniProtKB-UniRule"/>
</dbReference>
<dbReference type="GO" id="GO:0006412">
    <property type="term" value="P:translation"/>
    <property type="evidence" value="ECO:0007669"/>
    <property type="project" value="UniProtKB-UniRule"/>
</dbReference>
<dbReference type="FunFam" id="3.30.70.600:FF:000001">
    <property type="entry name" value="30S ribosomal protein S10"/>
    <property type="match status" value="1"/>
</dbReference>
<dbReference type="Gene3D" id="3.30.70.600">
    <property type="entry name" value="Ribosomal protein S10 domain"/>
    <property type="match status" value="1"/>
</dbReference>
<dbReference type="HAMAP" id="MF_00508">
    <property type="entry name" value="Ribosomal_uS10"/>
    <property type="match status" value="1"/>
</dbReference>
<dbReference type="InterPro" id="IPR001848">
    <property type="entry name" value="Ribosomal_uS10"/>
</dbReference>
<dbReference type="InterPro" id="IPR018268">
    <property type="entry name" value="Ribosomal_uS10_CS"/>
</dbReference>
<dbReference type="InterPro" id="IPR027486">
    <property type="entry name" value="Ribosomal_uS10_dom"/>
</dbReference>
<dbReference type="InterPro" id="IPR036838">
    <property type="entry name" value="Ribosomal_uS10_dom_sf"/>
</dbReference>
<dbReference type="NCBIfam" id="NF001861">
    <property type="entry name" value="PRK00596.1"/>
    <property type="match status" value="1"/>
</dbReference>
<dbReference type="NCBIfam" id="TIGR01049">
    <property type="entry name" value="rpsJ_bact"/>
    <property type="match status" value="1"/>
</dbReference>
<dbReference type="PANTHER" id="PTHR11700">
    <property type="entry name" value="30S RIBOSOMAL PROTEIN S10 FAMILY MEMBER"/>
    <property type="match status" value="1"/>
</dbReference>
<dbReference type="Pfam" id="PF00338">
    <property type="entry name" value="Ribosomal_S10"/>
    <property type="match status" value="1"/>
</dbReference>
<dbReference type="PRINTS" id="PR00971">
    <property type="entry name" value="RIBOSOMALS10"/>
</dbReference>
<dbReference type="SMART" id="SM01403">
    <property type="entry name" value="Ribosomal_S10"/>
    <property type="match status" value="1"/>
</dbReference>
<dbReference type="SUPFAM" id="SSF54999">
    <property type="entry name" value="Ribosomal protein S10"/>
    <property type="match status" value="1"/>
</dbReference>
<dbReference type="PROSITE" id="PS00361">
    <property type="entry name" value="RIBOSOMAL_S10"/>
    <property type="match status" value="1"/>
</dbReference>
<sequence>MMESQKIRIRLKAFDHRILDQSTGEIVQTARRTGADIRGPIPLPTKINRYTVLRSPHVDKKSREQFEIRTHKRIIDIVNPTPQTVDALMKLDLAAGVNVEIKL</sequence>
<keyword id="KW-1185">Reference proteome</keyword>
<keyword id="KW-0687">Ribonucleoprotein</keyword>
<keyword id="KW-0689">Ribosomal protein</keyword>
<reference key="1">
    <citation type="journal article" date="2009" name="Appl. Environ. Microbiol.">
        <title>Complete genome sequence of the chemolithoautotrophic marine magnetotactic coccus strain MC-1.</title>
        <authorList>
            <person name="Schubbe S."/>
            <person name="Williams T.J."/>
            <person name="Xie G."/>
            <person name="Kiss H.E."/>
            <person name="Brettin T.S."/>
            <person name="Martinez D."/>
            <person name="Ross C.A."/>
            <person name="Schuler D."/>
            <person name="Cox B.L."/>
            <person name="Nealson K.H."/>
            <person name="Bazylinski D.A."/>
        </authorList>
    </citation>
    <scope>NUCLEOTIDE SEQUENCE [LARGE SCALE GENOMIC DNA]</scope>
    <source>
        <strain>ATCC BAA-1437 / JCM 17883 / MC-1</strain>
    </source>
</reference>
<protein>
    <recommendedName>
        <fullName evidence="1">Small ribosomal subunit protein uS10</fullName>
    </recommendedName>
    <alternativeName>
        <fullName evidence="2">30S ribosomal protein S10</fullName>
    </alternativeName>
</protein>
<feature type="chain" id="PRO_1000015047" description="Small ribosomal subunit protein uS10">
    <location>
        <begin position="1"/>
        <end position="103"/>
    </location>
</feature>
<gene>
    <name evidence="1" type="primary">rpsJ</name>
    <name type="ordered locus">Mmc1_0846</name>
</gene>
<name>RS10_MAGMM</name>
<comment type="function">
    <text evidence="1">Involved in the binding of tRNA to the ribosomes.</text>
</comment>
<comment type="subunit">
    <text evidence="1">Part of the 30S ribosomal subunit.</text>
</comment>
<comment type="similarity">
    <text evidence="1">Belongs to the universal ribosomal protein uS10 family.</text>
</comment>
<evidence type="ECO:0000255" key="1">
    <source>
        <dbReference type="HAMAP-Rule" id="MF_00508"/>
    </source>
</evidence>
<evidence type="ECO:0000305" key="2"/>